<sequence length="549" mass="62233">MLPPRQQPRPGGLQTSLSLVSPDACGSPNPQERGSTSDQARDSPSESASSRETWPTSDALMLKKLEKEKENGYTEHSVVRNISNSDKMSLRDIARERVDVIAERMRNLPDEYLEKFKHELRVILEGLGGAQHREEFLFLQRLVNSRGDLTDGTLIITHRTQLEILVAIKTGIQAFLHPSVSLSQASLIDIFLYKRCRNIACGSMLPAEECSCEICAKKNGFCNLCMCVICYKFDFEVNSCRWIGCDLCSHWTHTDCAISNGQIGTGPSVKNGASSAETLFRCHACSRTSELLGWVKDVFQHCAPSWDAEAFVRELDYVRRIFQRSEDARGRKLFWKCEELIEKLKNGVADPMACKVILSFFQELDVDPSKSQDNDEGGRLIAPEEAFNKIADVVQEAIRKMEAVAEEKMRMVKKARLALDACDQELKDKAREVTSLKMERQRKKQQIDELESIVRLKQAEADMFDLKAGEARREAERLQRIALAKTEKSEEDYASRYLKQRLSEAEAEKQYLFEKIKLQESSRASQSSAGGNDPSQMMYSKIQDLIKNM</sequence>
<comment type="function">
    <text evidence="1 5">Required for the maintenance and/or establishment of both the shoot and root meristems, probably by controlling the expression of the meristem genes and of genes required for auxin responses. Involved in the development of the basal pole and in auxin-mediated root and vascular development in the embryo (By similarity). Confers sensitivity to turnip mosaic virus (TuMV) probably by promoting viral movement and multiplication via interaction with TuMV VPg (Probable).</text>
</comment>
<comment type="subunit">
    <text evidence="1 4">Self-interacts and probably forms heteromers (By similarity). Binds to VPg of pea seed borne mosaic virus (PSbMV), turnip mosaic virus (TuMV) and lettuce mosaic virus (LMV), but not with VPg of tobacco etch virus (TEV), cowpea mosaic virus (CPMV), tomato black ring virus (TBRV) and grapevine fan leaf virus (GFLV).</text>
</comment>
<comment type="subcellular location">
    <subcellularLocation>
        <location evidence="1">Nucleus</location>
    </subcellularLocation>
</comment>
<dbReference type="EMBL" id="AY271742">
    <property type="protein sequence ID" value="AAP22954.1"/>
    <property type="molecule type" value="mRNA"/>
</dbReference>
<dbReference type="SMR" id="Q84N38"/>
<dbReference type="GO" id="GO:0005634">
    <property type="term" value="C:nucleus"/>
    <property type="evidence" value="ECO:0007669"/>
    <property type="project" value="UniProtKB-SubCell"/>
</dbReference>
<dbReference type="GO" id="GO:0008270">
    <property type="term" value="F:zinc ion binding"/>
    <property type="evidence" value="ECO:0007669"/>
    <property type="project" value="UniProtKB-KW"/>
</dbReference>
<dbReference type="GO" id="GO:0010078">
    <property type="term" value="P:maintenance of root meristem identity"/>
    <property type="evidence" value="ECO:0007669"/>
    <property type="project" value="TreeGrafter"/>
</dbReference>
<dbReference type="GO" id="GO:0010492">
    <property type="term" value="P:maintenance of shoot apical meristem identity"/>
    <property type="evidence" value="ECO:0007669"/>
    <property type="project" value="TreeGrafter"/>
</dbReference>
<dbReference type="GO" id="GO:0010468">
    <property type="term" value="P:regulation of gene expression"/>
    <property type="evidence" value="ECO:0007669"/>
    <property type="project" value="TreeGrafter"/>
</dbReference>
<dbReference type="GO" id="GO:0010071">
    <property type="term" value="P:root meristem specification"/>
    <property type="evidence" value="ECO:0007669"/>
    <property type="project" value="TreeGrafter"/>
</dbReference>
<dbReference type="GO" id="GO:0046740">
    <property type="term" value="P:transport of virus in host, cell to cell"/>
    <property type="evidence" value="ECO:0000250"/>
    <property type="project" value="UniProtKB"/>
</dbReference>
<dbReference type="CDD" id="cd15612">
    <property type="entry name" value="PHD_OBE1_like"/>
    <property type="match status" value="1"/>
</dbReference>
<dbReference type="InterPro" id="IPR047578">
    <property type="entry name" value="OBE1-like_PHD"/>
</dbReference>
<dbReference type="InterPro" id="IPR004082">
    <property type="entry name" value="OBERON"/>
</dbReference>
<dbReference type="InterPro" id="IPR032881">
    <property type="entry name" value="Oberon-like_PHD"/>
</dbReference>
<dbReference type="InterPro" id="IPR032535">
    <property type="entry name" value="Oberon_cc"/>
</dbReference>
<dbReference type="InterPro" id="IPR001965">
    <property type="entry name" value="Znf_PHD"/>
</dbReference>
<dbReference type="PANTHER" id="PTHR21736:SF37">
    <property type="entry name" value="PROTEIN OBERON 2"/>
    <property type="match status" value="1"/>
</dbReference>
<dbReference type="PANTHER" id="PTHR21736">
    <property type="entry name" value="VERNALIZATION-INSENSITIVE PROTEIN 3"/>
    <property type="match status" value="1"/>
</dbReference>
<dbReference type="Pfam" id="PF16312">
    <property type="entry name" value="Oberon_cc"/>
    <property type="match status" value="1"/>
</dbReference>
<dbReference type="Pfam" id="PF07227">
    <property type="entry name" value="PHD_Oberon"/>
    <property type="match status" value="1"/>
</dbReference>
<dbReference type="PIRSF" id="PIRSF025218">
    <property type="entry name" value="DUF1423_pln"/>
    <property type="match status" value="1"/>
</dbReference>
<dbReference type="PRINTS" id="PR01544">
    <property type="entry name" value="ARATH130DUF"/>
</dbReference>
<dbReference type="SMART" id="SM00249">
    <property type="entry name" value="PHD"/>
    <property type="match status" value="1"/>
</dbReference>
<dbReference type="PROSITE" id="PS01359">
    <property type="entry name" value="ZF_PHD_1"/>
    <property type="match status" value="1"/>
</dbReference>
<gene>
    <name type="primary">PVIP</name>
</gene>
<evidence type="ECO:0000250" key="1"/>
<evidence type="ECO:0000255" key="2"/>
<evidence type="ECO:0000256" key="3">
    <source>
        <dbReference type="SAM" id="MobiDB-lite"/>
    </source>
</evidence>
<evidence type="ECO:0000269" key="4">
    <source>
    </source>
</evidence>
<evidence type="ECO:0000305" key="5"/>
<feature type="chain" id="PRO_0000399751" description="OBERON-like protein">
    <location>
        <begin position="1"/>
        <end position="549"/>
    </location>
</feature>
<feature type="zinc finger region" description="PHD-type">
    <location>
        <begin position="224"/>
        <end position="288"/>
    </location>
</feature>
<feature type="region of interest" description="Disordered" evidence="3">
    <location>
        <begin position="1"/>
        <end position="56"/>
    </location>
</feature>
<feature type="region of interest" description="Disordered" evidence="3">
    <location>
        <begin position="519"/>
        <end position="549"/>
    </location>
</feature>
<feature type="coiled-coil region" evidence="2">
    <location>
        <begin position="394"/>
        <end position="520"/>
    </location>
</feature>
<feature type="compositionally biased region" description="Polar residues" evidence="3">
    <location>
        <begin position="28"/>
        <end position="38"/>
    </location>
</feature>
<feature type="compositionally biased region" description="Polar residues" evidence="3">
    <location>
        <begin position="45"/>
        <end position="56"/>
    </location>
</feature>
<feature type="compositionally biased region" description="Polar residues" evidence="3">
    <location>
        <begin position="521"/>
        <end position="538"/>
    </location>
</feature>
<protein>
    <recommendedName>
        <fullName>OBERON-like protein</fullName>
    </recommendedName>
    <alternativeName>
        <fullName>Potyvirus VPg-interacting protein</fullName>
        <shortName>PVIPnb</shortName>
    </alternativeName>
</protein>
<name>PVIP_NICBE</name>
<accession>Q84N38</accession>
<keyword id="KW-0175">Coiled coil</keyword>
<keyword id="KW-0217">Developmental protein</keyword>
<keyword id="KW-0945">Host-virus interaction</keyword>
<keyword id="KW-0479">Metal-binding</keyword>
<keyword id="KW-0539">Nucleus</keyword>
<keyword id="KW-0862">Zinc</keyword>
<keyword id="KW-0863">Zinc-finger</keyword>
<proteinExistence type="evidence at protein level"/>
<organism>
    <name type="scientific">Nicotiana benthamiana</name>
    <dbReference type="NCBI Taxonomy" id="4100"/>
    <lineage>
        <taxon>Eukaryota</taxon>
        <taxon>Viridiplantae</taxon>
        <taxon>Streptophyta</taxon>
        <taxon>Embryophyta</taxon>
        <taxon>Tracheophyta</taxon>
        <taxon>Spermatophyta</taxon>
        <taxon>Magnoliopsida</taxon>
        <taxon>eudicotyledons</taxon>
        <taxon>Gunneridae</taxon>
        <taxon>Pentapetalae</taxon>
        <taxon>asterids</taxon>
        <taxon>lamiids</taxon>
        <taxon>Solanales</taxon>
        <taxon>Solanaceae</taxon>
        <taxon>Nicotianoideae</taxon>
        <taxon>Nicotianeae</taxon>
        <taxon>Nicotiana</taxon>
    </lineage>
</organism>
<reference key="1">
    <citation type="journal article" date="2004" name="J. Virol.">
        <title>A cysteine-rich plant protein potentiates Potyvirus movement through an interaction with the virus genome-linked protein VPg.</title>
        <authorList>
            <person name="Dunoyer P."/>
            <person name="Thomas C."/>
            <person name="Harrison S."/>
            <person name="Revers F."/>
            <person name="Maule A."/>
        </authorList>
    </citation>
    <scope>NUCLEOTIDE SEQUENCE [MRNA]</scope>
    <scope>INTERACTION WITH POTYVIRUS VPG PROTEIN</scope>
    <source>
        <tissue>Leaf</tissue>
    </source>
</reference>